<comment type="function">
    <text evidence="1">May be a component of the Integrator complex, a complex involved in the small nuclear RNAs (snRNA) U1 and U2 transcription and in their 3'-box-dependent processing.</text>
</comment>
<comment type="subcellular location">
    <subcellularLocation>
        <location evidence="1">Nucleus</location>
    </subcellularLocation>
</comment>
<protein>
    <recommendedName>
        <fullName>Integrator complex subunit 10-like protein</fullName>
    </recommendedName>
</protein>
<feature type="chain" id="PRO_0000344381" description="Integrator complex subunit 10-like protein">
    <location>
        <begin position="1"/>
        <end position="991"/>
    </location>
</feature>
<feature type="region of interest" description="Disordered" evidence="2">
    <location>
        <begin position="180"/>
        <end position="217"/>
    </location>
</feature>
<feature type="region of interest" description="Disordered" evidence="2">
    <location>
        <begin position="310"/>
        <end position="345"/>
    </location>
</feature>
<feature type="region of interest" description="Disordered" evidence="2">
    <location>
        <begin position="462"/>
        <end position="484"/>
    </location>
</feature>
<feature type="region of interest" description="Disordered" evidence="2">
    <location>
        <begin position="549"/>
        <end position="614"/>
    </location>
</feature>
<feature type="region of interest" description="Disordered" evidence="2">
    <location>
        <begin position="961"/>
        <end position="991"/>
    </location>
</feature>
<feature type="compositionally biased region" description="Low complexity" evidence="2">
    <location>
        <begin position="319"/>
        <end position="333"/>
    </location>
</feature>
<feature type="compositionally biased region" description="Acidic residues" evidence="2">
    <location>
        <begin position="473"/>
        <end position="484"/>
    </location>
</feature>
<feature type="compositionally biased region" description="Low complexity" evidence="2">
    <location>
        <begin position="549"/>
        <end position="609"/>
    </location>
</feature>
<feature type="compositionally biased region" description="Polar residues" evidence="2">
    <location>
        <begin position="964"/>
        <end position="991"/>
    </location>
</feature>
<organism>
    <name type="scientific">Dictyostelium discoideum</name>
    <name type="common">Social amoeba</name>
    <dbReference type="NCBI Taxonomy" id="44689"/>
    <lineage>
        <taxon>Eukaryota</taxon>
        <taxon>Amoebozoa</taxon>
        <taxon>Evosea</taxon>
        <taxon>Eumycetozoa</taxon>
        <taxon>Dictyostelia</taxon>
        <taxon>Dictyosteliales</taxon>
        <taxon>Dictyosteliaceae</taxon>
        <taxon>Dictyostelium</taxon>
    </lineage>
</organism>
<accession>Q552Q3</accession>
<accession>Q75K30</accession>
<name>INT10_DICDI</name>
<sequence length="991" mass="115960">MMVDNEEINSLSIENILERINKSSNINEAKSLCLFASSLFDNNQYLLIQRYLISIKERDFDISIQLFWRLFNNNSFKEYIVLVVLKFLEKEIEDLEYYDFIKKNYRDQFQKIFIDSDDNSTNNSSSSSNENKKNKRSYLKLNTILNKLTKSLNHLSFYISEIDNLNKFFNPITFLLNNNNNNNNNNNNNNNNNNNKNNSNNNNKNNNNNNDDSNNNNNNNFLKILELIQKSCQYLNENENYEYSILLYLLIKGKFENKIRTFIKSSKKEDQDIKSKIKRFWFNGIQSLNQYKNKYSSKIEIEPPLPMKSYFDEDDYDQKQQQQQQQQQQQQEQKGSKEDEEDIEKQKKSLTSEIELFLLPINRFCLPIIFHIENEEFEQLDIKGNSGSGSDSSSSISKLEIVDQCWKYYICKGDDITDESILEIQKFLQQFADSGKHLKRHQNNSILNFTINLLSNPEKARNDYFDRNSEGNGGDENDENSQESNDSYEFEIHLGIYLLSSLLYISSWRYFKFLVTGSSNIEKQNIQTIGTLKKNQILLFDANFNSNSNSSSGSNGIINNNSNSNQQSYHNNNNNNNNNNNNNNNNNNNNNNNNNNNNNNNNNNNNNNNQGQQPNLSMITHQVLYYSNVDDESSFDDEFPKIVFTKQQTEAIKHLTLCMECFNDLNQEPWINDFKRILSTTWNNSKFYWLYNSLADSHYYYKLDGANTLIPIGDSKKRLFNPNDELWFNRLLLNIGMTNHSEIEDSIICLLEILISISIPPPPSSSSSSFSSSNSSLNNDLFNQQLVPSKHTFKTIKPYLTVFSEEEILFWCIDTLATCYERLGMVGEITVLYQAYWNYYKSRFYQIINEIKGTPNQNPNLIPLSNLVKKDLQIGYFFPRFFDYIINIEMLEEFCFILNKGFKLDILQRNQTVSSNREMIDIIKRHITITTSNNNLTIPILLKQFFNEELDHFLIKKENREKQYSSSNTANNSGVNNSPIHNQNTDVEMNE</sequence>
<gene>
    <name type="ORF">DDB_G0275707</name>
</gene>
<keyword id="KW-0539">Nucleus</keyword>
<keyword id="KW-1185">Reference proteome</keyword>
<reference key="1">
    <citation type="journal article" date="2002" name="Nature">
        <title>Sequence and analysis of chromosome 2 of Dictyostelium discoideum.</title>
        <authorList>
            <person name="Gloeckner G."/>
            <person name="Eichinger L."/>
            <person name="Szafranski K."/>
            <person name="Pachebat J.A."/>
            <person name="Bankier A.T."/>
            <person name="Dear P.H."/>
            <person name="Lehmann R."/>
            <person name="Baumgart C."/>
            <person name="Parra G."/>
            <person name="Abril J.F."/>
            <person name="Guigo R."/>
            <person name="Kumpf K."/>
            <person name="Tunggal B."/>
            <person name="Cox E.C."/>
            <person name="Quail M.A."/>
            <person name="Platzer M."/>
            <person name="Rosenthal A."/>
            <person name="Noegel A.A."/>
        </authorList>
    </citation>
    <scope>NUCLEOTIDE SEQUENCE [LARGE SCALE GENOMIC DNA]</scope>
    <source>
        <strain>AX4</strain>
    </source>
</reference>
<reference key="2">
    <citation type="journal article" date="2005" name="Nature">
        <title>The genome of the social amoeba Dictyostelium discoideum.</title>
        <authorList>
            <person name="Eichinger L."/>
            <person name="Pachebat J.A."/>
            <person name="Gloeckner G."/>
            <person name="Rajandream M.A."/>
            <person name="Sucgang R."/>
            <person name="Berriman M."/>
            <person name="Song J."/>
            <person name="Olsen R."/>
            <person name="Szafranski K."/>
            <person name="Xu Q."/>
            <person name="Tunggal B."/>
            <person name="Kummerfeld S."/>
            <person name="Madera M."/>
            <person name="Konfortov B.A."/>
            <person name="Rivero F."/>
            <person name="Bankier A.T."/>
            <person name="Lehmann R."/>
            <person name="Hamlin N."/>
            <person name="Davies R."/>
            <person name="Gaudet P."/>
            <person name="Fey P."/>
            <person name="Pilcher K."/>
            <person name="Chen G."/>
            <person name="Saunders D."/>
            <person name="Sodergren E.J."/>
            <person name="Davis P."/>
            <person name="Kerhornou A."/>
            <person name="Nie X."/>
            <person name="Hall N."/>
            <person name="Anjard C."/>
            <person name="Hemphill L."/>
            <person name="Bason N."/>
            <person name="Farbrother P."/>
            <person name="Desany B."/>
            <person name="Just E."/>
            <person name="Morio T."/>
            <person name="Rost R."/>
            <person name="Churcher C.M."/>
            <person name="Cooper J."/>
            <person name="Haydock S."/>
            <person name="van Driessche N."/>
            <person name="Cronin A."/>
            <person name="Goodhead I."/>
            <person name="Muzny D.M."/>
            <person name="Mourier T."/>
            <person name="Pain A."/>
            <person name="Lu M."/>
            <person name="Harper D."/>
            <person name="Lindsay R."/>
            <person name="Hauser H."/>
            <person name="James K.D."/>
            <person name="Quiles M."/>
            <person name="Madan Babu M."/>
            <person name="Saito T."/>
            <person name="Buchrieser C."/>
            <person name="Wardroper A."/>
            <person name="Felder M."/>
            <person name="Thangavelu M."/>
            <person name="Johnson D."/>
            <person name="Knights A."/>
            <person name="Loulseged H."/>
            <person name="Mungall K.L."/>
            <person name="Oliver K."/>
            <person name="Price C."/>
            <person name="Quail M.A."/>
            <person name="Urushihara H."/>
            <person name="Hernandez J."/>
            <person name="Rabbinowitsch E."/>
            <person name="Steffen D."/>
            <person name="Sanders M."/>
            <person name="Ma J."/>
            <person name="Kohara Y."/>
            <person name="Sharp S."/>
            <person name="Simmonds M.N."/>
            <person name="Spiegler S."/>
            <person name="Tivey A."/>
            <person name="Sugano S."/>
            <person name="White B."/>
            <person name="Walker D."/>
            <person name="Woodward J.R."/>
            <person name="Winckler T."/>
            <person name="Tanaka Y."/>
            <person name="Shaulsky G."/>
            <person name="Schleicher M."/>
            <person name="Weinstock G.M."/>
            <person name="Rosenthal A."/>
            <person name="Cox E.C."/>
            <person name="Chisholm R.L."/>
            <person name="Gibbs R.A."/>
            <person name="Loomis W.F."/>
            <person name="Platzer M."/>
            <person name="Kay R.R."/>
            <person name="Williams J.G."/>
            <person name="Dear P.H."/>
            <person name="Noegel A.A."/>
            <person name="Barrell B.G."/>
            <person name="Kuspa A."/>
        </authorList>
    </citation>
    <scope>NUCLEOTIDE SEQUENCE [LARGE SCALE GENOMIC DNA]</scope>
    <source>
        <strain>AX4</strain>
    </source>
</reference>
<proteinExistence type="inferred from homology"/>
<evidence type="ECO:0000250" key="1"/>
<evidence type="ECO:0000256" key="2">
    <source>
        <dbReference type="SAM" id="MobiDB-lite"/>
    </source>
</evidence>
<dbReference type="EMBL" id="AAFI02000013">
    <property type="protein sequence ID" value="EAL69604.1"/>
    <property type="molecule type" value="Genomic_DNA"/>
</dbReference>
<dbReference type="RefSeq" id="XP_643628.1">
    <property type="nucleotide sequence ID" value="XM_638536.1"/>
</dbReference>
<dbReference type="FunCoup" id="Q552Q3">
    <property type="interactions" value="362"/>
</dbReference>
<dbReference type="PaxDb" id="44689-DDB0234103"/>
<dbReference type="EnsemblProtists" id="EAL69604">
    <property type="protein sequence ID" value="EAL69604"/>
    <property type="gene ID" value="DDB_G0275707"/>
</dbReference>
<dbReference type="GeneID" id="8620215"/>
<dbReference type="KEGG" id="ddi:DDB_G0275707"/>
<dbReference type="dictyBase" id="DDB_G0275707"/>
<dbReference type="VEuPathDB" id="AmoebaDB:DDB_G0275707"/>
<dbReference type="eggNOG" id="ENOG502SY21">
    <property type="taxonomic scope" value="Eukaryota"/>
</dbReference>
<dbReference type="HOGENOM" id="CLU_301577_0_0_1"/>
<dbReference type="InParanoid" id="Q552Q3"/>
<dbReference type="OMA" id="ARNDYFD"/>
<dbReference type="PRO" id="PR:Q552Q3"/>
<dbReference type="Proteomes" id="UP000002195">
    <property type="component" value="Chromosome 2"/>
</dbReference>
<dbReference type="GO" id="GO:0005634">
    <property type="term" value="C:nucleus"/>
    <property type="evidence" value="ECO:0007669"/>
    <property type="project" value="UniProtKB-SubCell"/>
</dbReference>
<dbReference type="InterPro" id="IPR053129">
    <property type="entry name" value="Integrator_complex_assoc"/>
</dbReference>
<dbReference type="PANTHER" id="PTHR48194">
    <property type="entry name" value="FINGER PROTEIN, PUTATIVE-RELATED"/>
    <property type="match status" value="1"/>
</dbReference>
<dbReference type="PANTHER" id="PTHR48194:SF1">
    <property type="entry name" value="INTEGRATOR COMPLEX SUBUNIT 10-LIKE PROTEIN"/>
    <property type="match status" value="1"/>
</dbReference>